<comment type="function">
    <text evidence="1">Usually encoded in the trnK tRNA gene intron. Probably assists in splicing its own and other chloroplast group II introns.</text>
</comment>
<comment type="subcellular location">
    <subcellularLocation>
        <location>Plastid</location>
        <location>Chloroplast</location>
    </subcellularLocation>
</comment>
<comment type="similarity">
    <text evidence="1">Belongs to the intron maturase 2 family. MatK subfamily.</text>
</comment>
<evidence type="ECO:0000255" key="1">
    <source>
        <dbReference type="HAMAP-Rule" id="MF_01390"/>
    </source>
</evidence>
<name>MATK_SCIVE</name>
<sequence length="505" mass="60140">MDKFQIDKNKHRPWQQCFLYPVLFQEDLYAIAHDNDLDKSSFSEPLENFLSKEFSFLTVKRLIRRIRQQNNSIVLSGNCDPNEMINRNQNSYSELILESLAVVSEVSFSMRSKPFLEGINEWKSFRSIHCLFPFMEDKLPHTNYISDIRIPYSIHPEILVRTFRRWMRDVPSLHLLRSILHEWRDSSSTENLQKALVVSGEKTKFSLFLWNSYVYEWESILIPLLKRSSHSRSLLSGFFPDRTLFDQKIKHIVVFPHQISTKRIWLLKDPFIHYLRYEERSLLVLKGTQLQVKKCRYHLFKFWQCSFHLWAQPYRIWIHELSKNCSSFLGYFLSVKMKPLVVRAKMLDRLFINDLITNELRPIAPISSIIRFFAKERFCVISGRPISKLAWTSLTDDDILDRFDRIWRNLFHHYSGSFNQEGLYYIKYILLLSCAKTLACKHKSTIRVVREELGSELFTKSFSKKREFISSSFSKTSSQRELNWNGDILQINPLANSWQKIQNKK</sequence>
<organism>
    <name type="scientific">Sciadopitys verticillata</name>
    <name type="common">Japanese umbrella-pine</name>
    <name type="synonym">Taxus verticillata</name>
    <dbReference type="NCBI Taxonomy" id="28979"/>
    <lineage>
        <taxon>Eukaryota</taxon>
        <taxon>Viridiplantae</taxon>
        <taxon>Streptophyta</taxon>
        <taxon>Embryophyta</taxon>
        <taxon>Tracheophyta</taxon>
        <taxon>Spermatophyta</taxon>
        <taxon>Pinopsida</taxon>
        <taxon>Pinidae</taxon>
        <taxon>Conifers II</taxon>
        <taxon>Cupressales</taxon>
        <taxon>Sciadopityaceae</taxon>
        <taxon>Sciadopitys</taxon>
    </lineage>
</organism>
<keyword id="KW-0150">Chloroplast</keyword>
<keyword id="KW-0507">mRNA processing</keyword>
<keyword id="KW-0934">Plastid</keyword>
<keyword id="KW-0694">RNA-binding</keyword>
<keyword id="KW-0819">tRNA processing</keyword>
<reference key="1">
    <citation type="journal article" date="2000" name="Mol. Phylogenet. Evol.">
        <title>Phylogeny of taxaceae and Cephalotaxaceae genera inferred from chloroplast matK gene and nuclear rDNA ITS region.</title>
        <authorList>
            <person name="Cheng Y."/>
            <person name="Nicolson R.G."/>
            <person name="Tripp K."/>
            <person name="Chaw S."/>
        </authorList>
    </citation>
    <scope>NUCLEOTIDE SEQUENCE [GENOMIC DNA]</scope>
    <source>
        <tissue>Leaf</tissue>
    </source>
</reference>
<gene>
    <name evidence="1" type="primary">matK</name>
</gene>
<geneLocation type="chloroplast"/>
<protein>
    <recommendedName>
        <fullName evidence="1">Maturase K</fullName>
    </recommendedName>
    <alternativeName>
        <fullName evidence="1">Intron maturase</fullName>
    </alternativeName>
</protein>
<proteinExistence type="inferred from homology"/>
<accession>Q9MVV9</accession>
<feature type="chain" id="PRO_0000143704" description="Maturase K">
    <location>
        <begin position="1"/>
        <end position="505"/>
    </location>
</feature>
<dbReference type="EMBL" id="AB023994">
    <property type="protein sequence ID" value="BAA86045.1"/>
    <property type="molecule type" value="Genomic_DNA"/>
</dbReference>
<dbReference type="RefSeq" id="YP_009240123.1">
    <property type="nucleotide sequence ID" value="NC_029734.1"/>
</dbReference>
<dbReference type="GeneID" id="27109708"/>
<dbReference type="GO" id="GO:0009507">
    <property type="term" value="C:chloroplast"/>
    <property type="evidence" value="ECO:0007669"/>
    <property type="project" value="UniProtKB-SubCell"/>
</dbReference>
<dbReference type="GO" id="GO:0003723">
    <property type="term" value="F:RNA binding"/>
    <property type="evidence" value="ECO:0007669"/>
    <property type="project" value="UniProtKB-KW"/>
</dbReference>
<dbReference type="GO" id="GO:0006397">
    <property type="term" value="P:mRNA processing"/>
    <property type="evidence" value="ECO:0007669"/>
    <property type="project" value="UniProtKB-KW"/>
</dbReference>
<dbReference type="GO" id="GO:0008380">
    <property type="term" value="P:RNA splicing"/>
    <property type="evidence" value="ECO:0007669"/>
    <property type="project" value="UniProtKB-UniRule"/>
</dbReference>
<dbReference type="GO" id="GO:0008033">
    <property type="term" value="P:tRNA processing"/>
    <property type="evidence" value="ECO:0007669"/>
    <property type="project" value="UniProtKB-KW"/>
</dbReference>
<dbReference type="HAMAP" id="MF_01390">
    <property type="entry name" value="MatK"/>
    <property type="match status" value="1"/>
</dbReference>
<dbReference type="InterPro" id="IPR024937">
    <property type="entry name" value="Domain_X"/>
</dbReference>
<dbReference type="InterPro" id="IPR002866">
    <property type="entry name" value="Maturase_MatK"/>
</dbReference>
<dbReference type="InterPro" id="IPR024942">
    <property type="entry name" value="Maturase_MatK_N"/>
</dbReference>
<dbReference type="PANTHER" id="PTHR34811">
    <property type="entry name" value="MATURASE K"/>
    <property type="match status" value="1"/>
</dbReference>
<dbReference type="PANTHER" id="PTHR34811:SF1">
    <property type="entry name" value="MATURASE K"/>
    <property type="match status" value="1"/>
</dbReference>
<dbReference type="Pfam" id="PF01348">
    <property type="entry name" value="Intron_maturas2"/>
    <property type="match status" value="1"/>
</dbReference>
<dbReference type="Pfam" id="PF01824">
    <property type="entry name" value="MatK_N"/>
    <property type="match status" value="1"/>
</dbReference>